<proteinExistence type="inferred from homology"/>
<name>PYRG_RHOPT</name>
<evidence type="ECO:0000255" key="1">
    <source>
        <dbReference type="HAMAP-Rule" id="MF_01227"/>
    </source>
</evidence>
<sequence>MARYIFITGGVVSSLGKGLASAALGALLQARGYKVRLRKLDPYLNLDPGTMSPYQHGEVFVTDDGAETDLDLGHYERFTGRPATKQDNITTGRIYQDILTKERRGDYLGATIQVVPHVTNAIKEFIVSDNDGYDFVLVEIGGTVGDIEGLPFFEAIRQIKNDLPRGDVIYIHLTLLPYIPSAGELKTKPTQHSVKELRSIGIQPDILLCRTDRPIPKEERRKLGLFCNVRESAVIEARDADSIYAVPEAYHAAGLDDEVLAAFAIAAKEPPQLGRWHEINERIRNPEGAVTIAIVGKYTGMKDAYKSLIEALSHGGIANKVQVKLDWIESEVFENEDPAPFLEHVNGILVPGGFGQRGAEGKIEAARFARERNVPYFGICFGMQMAVIEAARNLAGIEQANSTEFGPTPEPLVGLMTEWVRGNELEKRSQAGDLGGTMRLGAYPATLKRGSRVSQVYGGVTEISERHRHRYEVNTAYKDRLEQHGLKFSGMSPDGVLPEIVEYEDHPWFIGVQFHPELKSRPFDPHPLFASFVQAALVQSRLV</sequence>
<reference key="1">
    <citation type="submission" date="2008-05" db="EMBL/GenBank/DDBJ databases">
        <title>Complete sequence of Rhodopseudomonas palustris TIE-1.</title>
        <authorList>
            <consortium name="US DOE Joint Genome Institute"/>
            <person name="Lucas S."/>
            <person name="Copeland A."/>
            <person name="Lapidus A."/>
            <person name="Glavina del Rio T."/>
            <person name="Dalin E."/>
            <person name="Tice H."/>
            <person name="Pitluck S."/>
            <person name="Chain P."/>
            <person name="Malfatti S."/>
            <person name="Shin M."/>
            <person name="Vergez L."/>
            <person name="Lang D."/>
            <person name="Schmutz J."/>
            <person name="Larimer F."/>
            <person name="Land M."/>
            <person name="Hauser L."/>
            <person name="Kyrpides N."/>
            <person name="Mikhailova N."/>
            <person name="Emerson D."/>
            <person name="Newman D.K."/>
            <person name="Roden E."/>
            <person name="Richardson P."/>
        </authorList>
    </citation>
    <scope>NUCLEOTIDE SEQUENCE [LARGE SCALE GENOMIC DNA]</scope>
    <source>
        <strain>TIE-1</strain>
    </source>
</reference>
<protein>
    <recommendedName>
        <fullName evidence="1">CTP synthase</fullName>
        <ecNumber evidence="1">6.3.4.2</ecNumber>
    </recommendedName>
    <alternativeName>
        <fullName evidence="1">Cytidine 5'-triphosphate synthase</fullName>
    </alternativeName>
    <alternativeName>
        <fullName evidence="1">Cytidine triphosphate synthetase</fullName>
        <shortName evidence="1">CTP synthetase</shortName>
        <shortName evidence="1">CTPS</shortName>
    </alternativeName>
    <alternativeName>
        <fullName evidence="1">UTP--ammonia ligase</fullName>
    </alternativeName>
</protein>
<keyword id="KW-0067">ATP-binding</keyword>
<keyword id="KW-0315">Glutamine amidotransferase</keyword>
<keyword id="KW-0436">Ligase</keyword>
<keyword id="KW-0460">Magnesium</keyword>
<keyword id="KW-0479">Metal-binding</keyword>
<keyword id="KW-0547">Nucleotide-binding</keyword>
<keyword id="KW-0665">Pyrimidine biosynthesis</keyword>
<comment type="function">
    <text evidence="1">Catalyzes the ATP-dependent amination of UTP to CTP with either L-glutamine or ammonia as the source of nitrogen. Regulates intracellular CTP levels through interactions with the four ribonucleotide triphosphates.</text>
</comment>
<comment type="catalytic activity">
    <reaction evidence="1">
        <text>UTP + L-glutamine + ATP + H2O = CTP + L-glutamate + ADP + phosphate + 2 H(+)</text>
        <dbReference type="Rhea" id="RHEA:26426"/>
        <dbReference type="ChEBI" id="CHEBI:15377"/>
        <dbReference type="ChEBI" id="CHEBI:15378"/>
        <dbReference type="ChEBI" id="CHEBI:29985"/>
        <dbReference type="ChEBI" id="CHEBI:30616"/>
        <dbReference type="ChEBI" id="CHEBI:37563"/>
        <dbReference type="ChEBI" id="CHEBI:43474"/>
        <dbReference type="ChEBI" id="CHEBI:46398"/>
        <dbReference type="ChEBI" id="CHEBI:58359"/>
        <dbReference type="ChEBI" id="CHEBI:456216"/>
        <dbReference type="EC" id="6.3.4.2"/>
    </reaction>
</comment>
<comment type="catalytic activity">
    <reaction evidence="1">
        <text>L-glutamine + H2O = L-glutamate + NH4(+)</text>
        <dbReference type="Rhea" id="RHEA:15889"/>
        <dbReference type="ChEBI" id="CHEBI:15377"/>
        <dbReference type="ChEBI" id="CHEBI:28938"/>
        <dbReference type="ChEBI" id="CHEBI:29985"/>
        <dbReference type="ChEBI" id="CHEBI:58359"/>
    </reaction>
</comment>
<comment type="catalytic activity">
    <reaction evidence="1">
        <text>UTP + NH4(+) + ATP = CTP + ADP + phosphate + 2 H(+)</text>
        <dbReference type="Rhea" id="RHEA:16597"/>
        <dbReference type="ChEBI" id="CHEBI:15378"/>
        <dbReference type="ChEBI" id="CHEBI:28938"/>
        <dbReference type="ChEBI" id="CHEBI:30616"/>
        <dbReference type="ChEBI" id="CHEBI:37563"/>
        <dbReference type="ChEBI" id="CHEBI:43474"/>
        <dbReference type="ChEBI" id="CHEBI:46398"/>
        <dbReference type="ChEBI" id="CHEBI:456216"/>
    </reaction>
</comment>
<comment type="activity regulation">
    <text evidence="1">Allosterically activated by GTP, when glutamine is the substrate; GTP has no effect on the reaction when ammonia is the substrate. The allosteric effector GTP functions by stabilizing the protein conformation that binds the tetrahedral intermediate(s) formed during glutamine hydrolysis. Inhibited by the product CTP, via allosteric rather than competitive inhibition.</text>
</comment>
<comment type="pathway">
    <text evidence="1">Pyrimidine metabolism; CTP biosynthesis via de novo pathway; CTP from UDP: step 2/2.</text>
</comment>
<comment type="subunit">
    <text evidence="1">Homotetramer.</text>
</comment>
<comment type="miscellaneous">
    <text evidence="1">CTPSs have evolved a hybrid strategy for distinguishing between UTP and CTP. The overlapping regions of the product feedback inhibitory and substrate sites recognize a common feature in both compounds, the triphosphate moiety. To differentiate isosteric substrate and product pyrimidine rings, an additional pocket far from the expected kinase/ligase catalytic site, specifically recognizes the cytosine and ribose portions of the product inhibitor.</text>
</comment>
<comment type="similarity">
    <text evidence="1">Belongs to the CTP synthase family.</text>
</comment>
<accession>B3Q6M4</accession>
<organism>
    <name type="scientific">Rhodopseudomonas palustris (strain TIE-1)</name>
    <dbReference type="NCBI Taxonomy" id="395960"/>
    <lineage>
        <taxon>Bacteria</taxon>
        <taxon>Pseudomonadati</taxon>
        <taxon>Pseudomonadota</taxon>
        <taxon>Alphaproteobacteria</taxon>
        <taxon>Hyphomicrobiales</taxon>
        <taxon>Nitrobacteraceae</taxon>
        <taxon>Rhodopseudomonas</taxon>
    </lineage>
</organism>
<feature type="chain" id="PRO_1000139548" description="CTP synthase">
    <location>
        <begin position="1"/>
        <end position="543"/>
    </location>
</feature>
<feature type="domain" description="Glutamine amidotransferase type-1" evidence="1">
    <location>
        <begin position="291"/>
        <end position="542"/>
    </location>
</feature>
<feature type="region of interest" description="Amidoligase domain" evidence="1">
    <location>
        <begin position="1"/>
        <end position="265"/>
    </location>
</feature>
<feature type="active site" description="Nucleophile; for glutamine hydrolysis" evidence="1">
    <location>
        <position position="380"/>
    </location>
</feature>
<feature type="active site" evidence="1">
    <location>
        <position position="515"/>
    </location>
</feature>
<feature type="active site" evidence="1">
    <location>
        <position position="517"/>
    </location>
</feature>
<feature type="binding site" evidence="1">
    <location>
        <position position="13"/>
    </location>
    <ligand>
        <name>CTP</name>
        <dbReference type="ChEBI" id="CHEBI:37563"/>
        <note>allosteric inhibitor</note>
    </ligand>
</feature>
<feature type="binding site" evidence="1">
    <location>
        <position position="13"/>
    </location>
    <ligand>
        <name>UTP</name>
        <dbReference type="ChEBI" id="CHEBI:46398"/>
    </ligand>
</feature>
<feature type="binding site" evidence="1">
    <location>
        <begin position="14"/>
        <end position="19"/>
    </location>
    <ligand>
        <name>ATP</name>
        <dbReference type="ChEBI" id="CHEBI:30616"/>
    </ligand>
</feature>
<feature type="binding site" evidence="1">
    <location>
        <position position="54"/>
    </location>
    <ligand>
        <name>L-glutamine</name>
        <dbReference type="ChEBI" id="CHEBI:58359"/>
    </ligand>
</feature>
<feature type="binding site" evidence="1">
    <location>
        <position position="71"/>
    </location>
    <ligand>
        <name>ATP</name>
        <dbReference type="ChEBI" id="CHEBI:30616"/>
    </ligand>
</feature>
<feature type="binding site" evidence="1">
    <location>
        <position position="71"/>
    </location>
    <ligand>
        <name>Mg(2+)</name>
        <dbReference type="ChEBI" id="CHEBI:18420"/>
    </ligand>
</feature>
<feature type="binding site" evidence="1">
    <location>
        <position position="139"/>
    </location>
    <ligand>
        <name>Mg(2+)</name>
        <dbReference type="ChEBI" id="CHEBI:18420"/>
    </ligand>
</feature>
<feature type="binding site" evidence="1">
    <location>
        <begin position="146"/>
        <end position="148"/>
    </location>
    <ligand>
        <name>CTP</name>
        <dbReference type="ChEBI" id="CHEBI:37563"/>
        <note>allosteric inhibitor</note>
    </ligand>
</feature>
<feature type="binding site" evidence="1">
    <location>
        <begin position="186"/>
        <end position="191"/>
    </location>
    <ligand>
        <name>CTP</name>
        <dbReference type="ChEBI" id="CHEBI:37563"/>
        <note>allosteric inhibitor</note>
    </ligand>
</feature>
<feature type="binding site" evidence="1">
    <location>
        <begin position="186"/>
        <end position="191"/>
    </location>
    <ligand>
        <name>UTP</name>
        <dbReference type="ChEBI" id="CHEBI:46398"/>
    </ligand>
</feature>
<feature type="binding site" evidence="1">
    <location>
        <position position="222"/>
    </location>
    <ligand>
        <name>CTP</name>
        <dbReference type="ChEBI" id="CHEBI:37563"/>
        <note>allosteric inhibitor</note>
    </ligand>
</feature>
<feature type="binding site" evidence="1">
    <location>
        <position position="222"/>
    </location>
    <ligand>
        <name>UTP</name>
        <dbReference type="ChEBI" id="CHEBI:46398"/>
    </ligand>
</feature>
<feature type="binding site" evidence="1">
    <location>
        <begin position="238"/>
        <end position="240"/>
    </location>
    <ligand>
        <name>ATP</name>
        <dbReference type="ChEBI" id="CHEBI:30616"/>
    </ligand>
</feature>
<feature type="binding site" evidence="1">
    <location>
        <position position="353"/>
    </location>
    <ligand>
        <name>L-glutamine</name>
        <dbReference type="ChEBI" id="CHEBI:58359"/>
    </ligand>
</feature>
<feature type="binding site" evidence="1">
    <location>
        <begin position="381"/>
        <end position="384"/>
    </location>
    <ligand>
        <name>L-glutamine</name>
        <dbReference type="ChEBI" id="CHEBI:58359"/>
    </ligand>
</feature>
<feature type="binding site" evidence="1">
    <location>
        <position position="404"/>
    </location>
    <ligand>
        <name>L-glutamine</name>
        <dbReference type="ChEBI" id="CHEBI:58359"/>
    </ligand>
</feature>
<feature type="binding site" evidence="1">
    <location>
        <position position="470"/>
    </location>
    <ligand>
        <name>L-glutamine</name>
        <dbReference type="ChEBI" id="CHEBI:58359"/>
    </ligand>
</feature>
<gene>
    <name evidence="1" type="primary">pyrG</name>
    <name type="ordered locus">Rpal_3231</name>
</gene>
<dbReference type="EC" id="6.3.4.2" evidence="1"/>
<dbReference type="EMBL" id="CP001096">
    <property type="protein sequence ID" value="ACF01733.1"/>
    <property type="molecule type" value="Genomic_DNA"/>
</dbReference>
<dbReference type="RefSeq" id="WP_011158435.1">
    <property type="nucleotide sequence ID" value="NC_011004.1"/>
</dbReference>
<dbReference type="SMR" id="B3Q6M4"/>
<dbReference type="KEGG" id="rpt:Rpal_3231"/>
<dbReference type="HOGENOM" id="CLU_011675_5_0_5"/>
<dbReference type="OrthoDB" id="9801107at2"/>
<dbReference type="UniPathway" id="UPA00159">
    <property type="reaction ID" value="UER00277"/>
</dbReference>
<dbReference type="Proteomes" id="UP000001725">
    <property type="component" value="Chromosome"/>
</dbReference>
<dbReference type="GO" id="GO:0005829">
    <property type="term" value="C:cytosol"/>
    <property type="evidence" value="ECO:0007669"/>
    <property type="project" value="TreeGrafter"/>
</dbReference>
<dbReference type="GO" id="GO:0005524">
    <property type="term" value="F:ATP binding"/>
    <property type="evidence" value="ECO:0007669"/>
    <property type="project" value="UniProtKB-KW"/>
</dbReference>
<dbReference type="GO" id="GO:0003883">
    <property type="term" value="F:CTP synthase activity"/>
    <property type="evidence" value="ECO:0007669"/>
    <property type="project" value="UniProtKB-UniRule"/>
</dbReference>
<dbReference type="GO" id="GO:0004359">
    <property type="term" value="F:glutaminase activity"/>
    <property type="evidence" value="ECO:0007669"/>
    <property type="project" value="RHEA"/>
</dbReference>
<dbReference type="GO" id="GO:0042802">
    <property type="term" value="F:identical protein binding"/>
    <property type="evidence" value="ECO:0007669"/>
    <property type="project" value="TreeGrafter"/>
</dbReference>
<dbReference type="GO" id="GO:0046872">
    <property type="term" value="F:metal ion binding"/>
    <property type="evidence" value="ECO:0007669"/>
    <property type="project" value="UniProtKB-KW"/>
</dbReference>
<dbReference type="GO" id="GO:0044210">
    <property type="term" value="P:'de novo' CTP biosynthetic process"/>
    <property type="evidence" value="ECO:0007669"/>
    <property type="project" value="UniProtKB-UniRule"/>
</dbReference>
<dbReference type="GO" id="GO:0019856">
    <property type="term" value="P:pyrimidine nucleobase biosynthetic process"/>
    <property type="evidence" value="ECO:0007669"/>
    <property type="project" value="TreeGrafter"/>
</dbReference>
<dbReference type="CDD" id="cd03113">
    <property type="entry name" value="CTPS_N"/>
    <property type="match status" value="1"/>
</dbReference>
<dbReference type="CDD" id="cd01746">
    <property type="entry name" value="GATase1_CTP_Synthase"/>
    <property type="match status" value="1"/>
</dbReference>
<dbReference type="FunFam" id="3.40.50.300:FF:000009">
    <property type="entry name" value="CTP synthase"/>
    <property type="match status" value="1"/>
</dbReference>
<dbReference type="FunFam" id="3.40.50.880:FF:000002">
    <property type="entry name" value="CTP synthase"/>
    <property type="match status" value="1"/>
</dbReference>
<dbReference type="Gene3D" id="3.40.50.880">
    <property type="match status" value="1"/>
</dbReference>
<dbReference type="Gene3D" id="3.40.50.300">
    <property type="entry name" value="P-loop containing nucleotide triphosphate hydrolases"/>
    <property type="match status" value="1"/>
</dbReference>
<dbReference type="HAMAP" id="MF_01227">
    <property type="entry name" value="PyrG"/>
    <property type="match status" value="1"/>
</dbReference>
<dbReference type="InterPro" id="IPR029062">
    <property type="entry name" value="Class_I_gatase-like"/>
</dbReference>
<dbReference type="InterPro" id="IPR004468">
    <property type="entry name" value="CTP_synthase"/>
</dbReference>
<dbReference type="InterPro" id="IPR017456">
    <property type="entry name" value="CTP_synthase_N"/>
</dbReference>
<dbReference type="InterPro" id="IPR017926">
    <property type="entry name" value="GATASE"/>
</dbReference>
<dbReference type="InterPro" id="IPR033828">
    <property type="entry name" value="GATase1_CTP_Synthase"/>
</dbReference>
<dbReference type="InterPro" id="IPR027417">
    <property type="entry name" value="P-loop_NTPase"/>
</dbReference>
<dbReference type="NCBIfam" id="NF003792">
    <property type="entry name" value="PRK05380.1"/>
    <property type="match status" value="1"/>
</dbReference>
<dbReference type="NCBIfam" id="TIGR00337">
    <property type="entry name" value="PyrG"/>
    <property type="match status" value="1"/>
</dbReference>
<dbReference type="PANTHER" id="PTHR11550">
    <property type="entry name" value="CTP SYNTHASE"/>
    <property type="match status" value="1"/>
</dbReference>
<dbReference type="PANTHER" id="PTHR11550:SF0">
    <property type="entry name" value="CTP SYNTHASE-RELATED"/>
    <property type="match status" value="1"/>
</dbReference>
<dbReference type="Pfam" id="PF06418">
    <property type="entry name" value="CTP_synth_N"/>
    <property type="match status" value="1"/>
</dbReference>
<dbReference type="Pfam" id="PF00117">
    <property type="entry name" value="GATase"/>
    <property type="match status" value="1"/>
</dbReference>
<dbReference type="SUPFAM" id="SSF52317">
    <property type="entry name" value="Class I glutamine amidotransferase-like"/>
    <property type="match status" value="1"/>
</dbReference>
<dbReference type="SUPFAM" id="SSF52540">
    <property type="entry name" value="P-loop containing nucleoside triphosphate hydrolases"/>
    <property type="match status" value="1"/>
</dbReference>
<dbReference type="PROSITE" id="PS51273">
    <property type="entry name" value="GATASE_TYPE_1"/>
    <property type="match status" value="1"/>
</dbReference>